<name>SDHE_XANAC</name>
<proteinExistence type="inferred from homology"/>
<comment type="function">
    <text evidence="1">An FAD assembly protein, which accelerates covalent attachment of the cofactor into other proteins. Plays an essential role in the assembly of succinate dehydrogenase (SDH, respiratory complex II), an enzyme complex that is a component of both the tricarboxylic acid cycle and the electron transport chain, and which couples the oxidation of succinate to fumarate with the reduction of ubiquinone (coenzyme Q) to ubiquinol. Required for flavinylation (covalent attachment of FAD) of the flavoprotein subunit SdhA of SDH and other flavinylated proteins as well.</text>
</comment>
<comment type="subcellular location">
    <subcellularLocation>
        <location evidence="1">Cytoplasm</location>
    </subcellularLocation>
</comment>
<comment type="similarity">
    <text evidence="2">Belongs to the SdhE FAD assembly factor family.</text>
</comment>
<accession>Q8PKT3</accession>
<keyword id="KW-0143">Chaperone</keyword>
<keyword id="KW-0963">Cytoplasm</keyword>
<sequence>MWFAAAPALGSGAAVVFGPPCGAVESEMDEQTLLKKLRWRCRRGMRELDQLFGRYLDQRWAQAPDAERAVFLQLLDCEDDKLWRWFMGYEACPDAANAALIADIRALPA</sequence>
<organism>
    <name type="scientific">Xanthomonas axonopodis pv. citri (strain 306)</name>
    <dbReference type="NCBI Taxonomy" id="190486"/>
    <lineage>
        <taxon>Bacteria</taxon>
        <taxon>Pseudomonadati</taxon>
        <taxon>Pseudomonadota</taxon>
        <taxon>Gammaproteobacteria</taxon>
        <taxon>Lysobacterales</taxon>
        <taxon>Lysobacteraceae</taxon>
        <taxon>Xanthomonas</taxon>
    </lineage>
</organism>
<evidence type="ECO:0000250" key="1">
    <source>
        <dbReference type="UniProtKB" id="G4V4G2"/>
    </source>
</evidence>
<evidence type="ECO:0000305" key="2"/>
<protein>
    <recommendedName>
        <fullName>FAD assembly factor SdhE</fullName>
    </recommendedName>
</protein>
<dbReference type="EMBL" id="AE008923">
    <property type="protein sequence ID" value="AAM36936.1"/>
    <property type="molecule type" value="Genomic_DNA"/>
</dbReference>
<dbReference type="SMR" id="Q8PKT3"/>
<dbReference type="KEGG" id="xac:XAC2079"/>
<dbReference type="eggNOG" id="COG2938">
    <property type="taxonomic scope" value="Bacteria"/>
</dbReference>
<dbReference type="HOGENOM" id="CLU_103054_2_1_6"/>
<dbReference type="Proteomes" id="UP000000576">
    <property type="component" value="Chromosome"/>
</dbReference>
<dbReference type="GO" id="GO:0005737">
    <property type="term" value="C:cytoplasm"/>
    <property type="evidence" value="ECO:0007669"/>
    <property type="project" value="UniProtKB-SubCell"/>
</dbReference>
<dbReference type="GO" id="GO:0006105">
    <property type="term" value="P:succinate metabolic process"/>
    <property type="evidence" value="ECO:0007669"/>
    <property type="project" value="TreeGrafter"/>
</dbReference>
<dbReference type="Gene3D" id="1.10.150.250">
    <property type="entry name" value="Flavinator of succinate dehydrogenase"/>
    <property type="match status" value="1"/>
</dbReference>
<dbReference type="InterPro" id="IPR005631">
    <property type="entry name" value="SDH"/>
</dbReference>
<dbReference type="InterPro" id="IPR036714">
    <property type="entry name" value="SDH_sf"/>
</dbReference>
<dbReference type="InterPro" id="IPR050531">
    <property type="entry name" value="SdhE_FAD_assembly_factor"/>
</dbReference>
<dbReference type="PANTHER" id="PTHR39585">
    <property type="entry name" value="FAD ASSEMBLY FACTOR SDHE"/>
    <property type="match status" value="1"/>
</dbReference>
<dbReference type="PANTHER" id="PTHR39585:SF1">
    <property type="entry name" value="FAD ASSEMBLY FACTOR SDHE"/>
    <property type="match status" value="1"/>
</dbReference>
<dbReference type="Pfam" id="PF03937">
    <property type="entry name" value="Sdh5"/>
    <property type="match status" value="1"/>
</dbReference>
<dbReference type="SUPFAM" id="SSF109910">
    <property type="entry name" value="YgfY-like"/>
    <property type="match status" value="1"/>
</dbReference>
<feature type="chain" id="PRO_0000214431" description="FAD assembly factor SdhE">
    <location>
        <begin position="1"/>
        <end position="109"/>
    </location>
</feature>
<gene>
    <name type="primary">sdhE</name>
    <name type="ordered locus">XAC2079</name>
</gene>
<reference key="1">
    <citation type="journal article" date="2002" name="Nature">
        <title>Comparison of the genomes of two Xanthomonas pathogens with differing host specificities.</title>
        <authorList>
            <person name="da Silva A.C.R."/>
            <person name="Ferro J.A."/>
            <person name="Reinach F.C."/>
            <person name="Farah C.S."/>
            <person name="Furlan L.R."/>
            <person name="Quaggio R.B."/>
            <person name="Monteiro-Vitorello C.B."/>
            <person name="Van Sluys M.A."/>
            <person name="Almeida N.F. Jr."/>
            <person name="Alves L.M.C."/>
            <person name="do Amaral A.M."/>
            <person name="Bertolini M.C."/>
            <person name="Camargo L.E.A."/>
            <person name="Camarotte G."/>
            <person name="Cannavan F."/>
            <person name="Cardozo J."/>
            <person name="Chambergo F."/>
            <person name="Ciapina L.P."/>
            <person name="Cicarelli R.M.B."/>
            <person name="Coutinho L.L."/>
            <person name="Cursino-Santos J.R."/>
            <person name="El-Dorry H."/>
            <person name="Faria J.B."/>
            <person name="Ferreira A.J.S."/>
            <person name="Ferreira R.C.C."/>
            <person name="Ferro M.I.T."/>
            <person name="Formighieri E.F."/>
            <person name="Franco M.C."/>
            <person name="Greggio C.C."/>
            <person name="Gruber A."/>
            <person name="Katsuyama A.M."/>
            <person name="Kishi L.T."/>
            <person name="Leite R.P."/>
            <person name="Lemos E.G.M."/>
            <person name="Lemos M.V.F."/>
            <person name="Locali E.C."/>
            <person name="Machado M.A."/>
            <person name="Madeira A.M.B.N."/>
            <person name="Martinez-Rossi N.M."/>
            <person name="Martins E.C."/>
            <person name="Meidanis J."/>
            <person name="Menck C.F.M."/>
            <person name="Miyaki C.Y."/>
            <person name="Moon D.H."/>
            <person name="Moreira L.M."/>
            <person name="Novo M.T.M."/>
            <person name="Okura V.K."/>
            <person name="Oliveira M.C."/>
            <person name="Oliveira V.R."/>
            <person name="Pereira H.A."/>
            <person name="Rossi A."/>
            <person name="Sena J.A.D."/>
            <person name="Silva C."/>
            <person name="de Souza R.F."/>
            <person name="Spinola L.A.F."/>
            <person name="Takita M.A."/>
            <person name="Tamura R.E."/>
            <person name="Teixeira E.C."/>
            <person name="Tezza R.I.D."/>
            <person name="Trindade dos Santos M."/>
            <person name="Truffi D."/>
            <person name="Tsai S.M."/>
            <person name="White F.F."/>
            <person name="Setubal J.C."/>
            <person name="Kitajima J.P."/>
        </authorList>
    </citation>
    <scope>NUCLEOTIDE SEQUENCE [LARGE SCALE GENOMIC DNA]</scope>
    <source>
        <strain>306</strain>
    </source>
</reference>